<gene>
    <name evidence="6" type="primary">Hnr</name>
</gene>
<proteinExistence type="evidence at protein level"/>
<sequence>MFKIDEEKCKKCRMCVKECPVHAVYYEKKDKGAIVEITEKCVECGICKRVCKFGAIENDAPLESVITCSSCPIQCKVPLGETGACTRYRNVGGKLVRDRELVVEALEQKEAADNIKKPIITAVGAGTNYPCSKPAPHIVSECRDGVDVVTVVTEAPLSYSGLVIKLDTNTYIGEEGDPVYRDGKVVGMVNTEEYGSKMIAIGGANRLTGDNGFATARTIVELANGEEVELKVNKKIVLKLKAGVAPVIDGVEESIMRIGCGSATVGLFAKRMKDAVDECIVIDHHVIGLCSEHLAGEAVGMTWSGIIPNATKSSRGRYFGGHGSGIGGTSLETPRDAIKGADMSIAKAGMQVMVVNTTGEIYALFELKADGSFDEIPMTEAALGVALAIQDNCQRSMTSILYTGGTGGSARGGVCTHPVKITEAVHEQKAVLTIGGAPAFVYPGGGINFMVDTQKVVNKAFTWVPTPATVAPVEYTMTVADYEAMGGHMDQIKDVSEYK</sequence>
<organism>
    <name type="scientific">Eubacterium barkeri</name>
    <name type="common">Clostridium barkeri</name>
    <dbReference type="NCBI Taxonomy" id="1528"/>
    <lineage>
        <taxon>Bacteria</taxon>
        <taxon>Bacillati</taxon>
        <taxon>Bacillota</taxon>
        <taxon>Clostridia</taxon>
        <taxon>Eubacteriales</taxon>
        <taxon>Eubacteriaceae</taxon>
        <taxon>Eubacterium</taxon>
    </lineage>
</organism>
<comment type="function">
    <text evidence="4">Catalyzes the reversible reduction of 6-hydroxynicotinate to 6-oxo-1,4,5,6-tetrahydronicotinate.</text>
</comment>
<comment type="catalytic activity">
    <reaction evidence="4">
        <text>1,4,5,6-tetrahydro-6-oxonicotinate + oxidized 2[4Fe-4S]-[ferredoxin] = 6-hydroxynicotinate + reduced 2[4Fe-4S]-[ferredoxin] + 2 H(+)</text>
        <dbReference type="Rhea" id="RHEA:17225"/>
        <dbReference type="Rhea" id="RHEA-COMP:10002"/>
        <dbReference type="Rhea" id="RHEA-COMP:10004"/>
        <dbReference type="ChEBI" id="CHEBI:15378"/>
        <dbReference type="ChEBI" id="CHEBI:33722"/>
        <dbReference type="ChEBI" id="CHEBI:33723"/>
        <dbReference type="ChEBI" id="CHEBI:57664"/>
        <dbReference type="ChEBI" id="CHEBI:57777"/>
        <dbReference type="EC" id="1.3.7.1"/>
    </reaction>
</comment>
<comment type="cofactor">
    <cofactor evidence="3">
        <name>an oxidized flavin</name>
        <dbReference type="ChEBI" id="CHEBI:60531"/>
    </cofactor>
    <text evidence="3">Binds 1 flavin covalently per subunit.</text>
</comment>
<comment type="cofactor">
    <cofactor evidence="3">
        <name>[2Fe-2S] cluster</name>
        <dbReference type="ChEBI" id="CHEBI:190135"/>
    </cofactor>
    <text evidence="3">Binds 1 [2Fe-2S] cluster per subunit.</text>
</comment>
<comment type="cofactor">
    <cofactor evidence="3">
        <name>[4Fe-4S] cluster</name>
        <dbReference type="ChEBI" id="CHEBI:49883"/>
    </cofactor>
    <text evidence="3">Binds 2 [4Fe-4S] clusters per subunit.</text>
</comment>
<comment type="biophysicochemical properties">
    <kinetics>
        <KM evidence="4">16 uM for reduced ferrodoxin</KM>
    </kinetics>
    <phDependence>
        <text evidence="4">Optimum pH for the reduction of 6-hydroxynicotinate is 6.5. Activity declines rapidly below pH 5.6.</text>
    </phDependence>
</comment>
<comment type="pathway">
    <text evidence="3">Cofactor degradation; nicotinate degradation; propanoate and pyruvate from 6-hydroxynicotinate: step 1/8.</text>
</comment>
<comment type="subunit">
    <text evidence="3">Homotetramer.</text>
</comment>
<accession>Q0QLF7</accession>
<protein>
    <recommendedName>
        <fullName evidence="6">6-hydroxynicotinate reductase</fullName>
        <ecNumber>1.3.7.1</ecNumber>
    </recommendedName>
</protein>
<keyword id="KW-0001">2Fe-2S</keyword>
<keyword id="KW-0004">4Fe-4S</keyword>
<keyword id="KW-0903">Direct protein sequencing</keyword>
<keyword id="KW-0408">Iron</keyword>
<keyword id="KW-0411">Iron-sulfur</keyword>
<keyword id="KW-0479">Metal-binding</keyword>
<keyword id="KW-0560">Oxidoreductase</keyword>
<keyword id="KW-0677">Repeat</keyword>
<dbReference type="EC" id="1.3.7.1"/>
<dbReference type="EMBL" id="DQ310789">
    <property type="protein sequence ID" value="ABC88393.1"/>
    <property type="molecule type" value="Genomic_DNA"/>
</dbReference>
<dbReference type="RefSeq" id="WP_090245352.1">
    <property type="nucleotide sequence ID" value="NZ_FNOU01000012.1"/>
</dbReference>
<dbReference type="STRING" id="1528.SAMN04488579_11219"/>
<dbReference type="KEGG" id="ag:ABC88393"/>
<dbReference type="OrthoDB" id="9794954at2"/>
<dbReference type="BioCyc" id="MetaCyc:MONOMER-13675"/>
<dbReference type="UniPathway" id="UPA01010">
    <property type="reaction ID" value="UER01012"/>
</dbReference>
<dbReference type="GO" id="GO:0051537">
    <property type="term" value="F:2 iron, 2 sulfur cluster binding"/>
    <property type="evidence" value="ECO:0007669"/>
    <property type="project" value="UniProtKB-KW"/>
</dbReference>
<dbReference type="GO" id="GO:0051539">
    <property type="term" value="F:4 iron, 4 sulfur cluster binding"/>
    <property type="evidence" value="ECO:0007669"/>
    <property type="project" value="UniProtKB-KW"/>
</dbReference>
<dbReference type="GO" id="GO:0047595">
    <property type="term" value="F:6-hydroxynicotinate reductase activity"/>
    <property type="evidence" value="ECO:0000314"/>
    <property type="project" value="UniProtKB"/>
</dbReference>
<dbReference type="GO" id="GO:0046872">
    <property type="term" value="F:metal ion binding"/>
    <property type="evidence" value="ECO:0007669"/>
    <property type="project" value="UniProtKB-KW"/>
</dbReference>
<dbReference type="GO" id="GO:1901848">
    <property type="term" value="P:nicotinate catabolic process"/>
    <property type="evidence" value="ECO:0000314"/>
    <property type="project" value="UniProtKB"/>
</dbReference>
<dbReference type="Gene3D" id="3.30.70.20">
    <property type="match status" value="1"/>
</dbReference>
<dbReference type="InterPro" id="IPR017896">
    <property type="entry name" value="4Fe4S_Fe-S-bd"/>
</dbReference>
<dbReference type="InterPro" id="IPR017900">
    <property type="entry name" value="4Fe4S_Fe_S_CS"/>
</dbReference>
<dbReference type="Pfam" id="PF13237">
    <property type="entry name" value="Fer4_10"/>
    <property type="match status" value="1"/>
</dbReference>
<dbReference type="SUPFAM" id="SSF54862">
    <property type="entry name" value="4Fe-4S ferredoxins"/>
    <property type="match status" value="1"/>
</dbReference>
<dbReference type="PROSITE" id="PS00198">
    <property type="entry name" value="4FE4S_FER_1"/>
    <property type="match status" value="1"/>
</dbReference>
<dbReference type="PROSITE" id="PS51379">
    <property type="entry name" value="4FE4S_FER_2"/>
    <property type="match status" value="2"/>
</dbReference>
<name>HNR_EUBBA</name>
<evidence type="ECO:0000250" key="1">
    <source>
        <dbReference type="UniProtKB" id="P00195"/>
    </source>
</evidence>
<evidence type="ECO:0000255" key="2">
    <source>
        <dbReference type="PROSITE-ProRule" id="PRU00711"/>
    </source>
</evidence>
<evidence type="ECO:0000269" key="3">
    <source>
    </source>
</evidence>
<evidence type="ECO:0000269" key="4">
    <source>
    </source>
</evidence>
<evidence type="ECO:0000305" key="5"/>
<evidence type="ECO:0000312" key="6">
    <source>
        <dbReference type="EMBL" id="ABC88393.1"/>
    </source>
</evidence>
<reference evidence="5 6" key="1">
    <citation type="journal article" date="2006" name="Proc. Natl. Acad. Sci. U.S.A.">
        <title>Molecular and functional analysis of nicotinate catabolism in Eubacterium barkeri.</title>
        <authorList>
            <person name="Alhapel A."/>
            <person name="Darley D.J."/>
            <person name="Wagener N."/>
            <person name="Eckel E."/>
            <person name="Elsner N."/>
            <person name="Pierik A.J."/>
        </authorList>
    </citation>
    <scope>NUCLEOTIDE SEQUENCE [GENOMIC DNA]</scope>
    <scope>PROTEIN SEQUENCE OF 1-26</scope>
    <scope>COFACTOR</scope>
    <scope>PATHWAY</scope>
    <scope>SUBUNIT</scope>
    <source>
        <strain evidence="6">ATCC 25849 / DSM 1223 / JCM 1389 / NCIMB 10623 / VKM B-1775 / VPI 5359</strain>
    </source>
</reference>
<reference evidence="5" key="2">
    <citation type="journal article" date="1969" name="J. Biol. Chem.">
        <title>Nicotinic acid metabolism. IV. Ferredoxin-dependent reduction of 6-hydroxynicotinic acid to 6-oxo-1,4,5,6-tetrahydronicotinic acid.</title>
        <authorList>
            <person name="Holcenberg J.S."/>
            <person name="Tsai L."/>
        </authorList>
    </citation>
    <scope>FUNCTION</scope>
    <scope>CATALYTIC ACTIVITY</scope>
    <scope>BIOPHYSICOCHEMICAL PROPERTIES</scope>
</reference>
<feature type="chain" id="PRO_0000403975" description="6-hydroxynicotinate reductase">
    <location>
        <begin position="1"/>
        <end position="499"/>
    </location>
</feature>
<feature type="domain" description="4Fe-4S ferredoxin-type 1" evidence="2">
    <location>
        <begin position="1"/>
        <end position="29"/>
    </location>
</feature>
<feature type="domain" description="4Fe-4S ferredoxin-type 2" evidence="2">
    <location>
        <begin position="31"/>
        <end position="61"/>
    </location>
</feature>
<feature type="binding site" evidence="1">
    <location>
        <position position="9"/>
    </location>
    <ligand>
        <name>[4Fe-4S] cluster</name>
        <dbReference type="ChEBI" id="CHEBI:49883"/>
        <label>1</label>
    </ligand>
</feature>
<feature type="binding site" evidence="1">
    <location>
        <position position="12"/>
    </location>
    <ligand>
        <name>[4Fe-4S] cluster</name>
        <dbReference type="ChEBI" id="CHEBI:49883"/>
        <label>1</label>
    </ligand>
</feature>
<feature type="binding site" evidence="1">
    <location>
        <position position="15"/>
    </location>
    <ligand>
        <name>[4Fe-4S] cluster</name>
        <dbReference type="ChEBI" id="CHEBI:49883"/>
        <label>1</label>
    </ligand>
</feature>
<feature type="binding site" evidence="1">
    <location>
        <position position="19"/>
    </location>
    <ligand>
        <name>[4Fe-4S] cluster</name>
        <dbReference type="ChEBI" id="CHEBI:49883"/>
        <label>2</label>
    </ligand>
</feature>
<feature type="binding site" evidence="1">
    <location>
        <position position="41"/>
    </location>
    <ligand>
        <name>[4Fe-4S] cluster</name>
        <dbReference type="ChEBI" id="CHEBI:49883"/>
        <label>2</label>
    </ligand>
</feature>
<feature type="binding site" evidence="1">
    <location>
        <position position="44"/>
    </location>
    <ligand>
        <name>[4Fe-4S] cluster</name>
        <dbReference type="ChEBI" id="CHEBI:49883"/>
        <label>2</label>
    </ligand>
</feature>
<feature type="binding site" evidence="1">
    <location>
        <position position="47"/>
    </location>
    <ligand>
        <name>[4Fe-4S] cluster</name>
        <dbReference type="ChEBI" id="CHEBI:49883"/>
        <label>2</label>
    </ligand>
</feature>
<feature type="binding site" evidence="1">
    <location>
        <position position="51"/>
    </location>
    <ligand>
        <name>[4Fe-4S] cluster</name>
        <dbReference type="ChEBI" id="CHEBI:49883"/>
        <label>1</label>
    </ligand>
</feature>